<comment type="function">
    <text evidence="1">Transaldolase is important for the balance of metabolites in the pentose-phosphate pathway.</text>
</comment>
<comment type="catalytic activity">
    <reaction>
        <text>D-sedoheptulose 7-phosphate + D-glyceraldehyde 3-phosphate = D-erythrose 4-phosphate + beta-D-fructose 6-phosphate</text>
        <dbReference type="Rhea" id="RHEA:17053"/>
        <dbReference type="ChEBI" id="CHEBI:16897"/>
        <dbReference type="ChEBI" id="CHEBI:57483"/>
        <dbReference type="ChEBI" id="CHEBI:57634"/>
        <dbReference type="ChEBI" id="CHEBI:59776"/>
        <dbReference type="EC" id="2.2.1.2"/>
    </reaction>
</comment>
<comment type="pathway">
    <text>Carbohydrate degradation; pentose phosphate pathway; D-glyceraldehyde 3-phosphate and beta-D-fructose 6-phosphate from D-ribose 5-phosphate and D-xylulose 5-phosphate (non-oxidative stage): step 2/3.</text>
</comment>
<comment type="subcellular location">
    <subcellularLocation>
        <location evidence="1">Cytoplasm</location>
    </subcellularLocation>
</comment>
<comment type="similarity">
    <text evidence="2">Belongs to the transaldolase family. Type 2 subfamily.</text>
</comment>
<accession>P9WG33</accession>
<accession>L0T6W3</accession>
<accession>O06812</accession>
<proteinExistence type="evidence at protein level"/>
<keyword id="KW-0963">Cytoplasm</keyword>
<keyword id="KW-0570">Pentose shunt</keyword>
<keyword id="KW-1185">Reference proteome</keyword>
<keyword id="KW-0704">Schiff base</keyword>
<keyword id="KW-0808">Transferase</keyword>
<name>TAL_MYCTU</name>
<feature type="chain" id="PRO_0000173636" description="Transaldolase">
    <location>
        <begin position="1"/>
        <end position="373"/>
    </location>
</feature>
<feature type="active site" description="Schiff-base intermediate with substrate" evidence="1">
    <location>
        <position position="143"/>
    </location>
</feature>
<organism>
    <name type="scientific">Mycobacterium tuberculosis (strain ATCC 25618 / H37Rv)</name>
    <dbReference type="NCBI Taxonomy" id="83332"/>
    <lineage>
        <taxon>Bacteria</taxon>
        <taxon>Bacillati</taxon>
        <taxon>Actinomycetota</taxon>
        <taxon>Actinomycetes</taxon>
        <taxon>Mycobacteriales</taxon>
        <taxon>Mycobacteriaceae</taxon>
        <taxon>Mycobacterium</taxon>
        <taxon>Mycobacterium tuberculosis complex</taxon>
    </lineage>
</organism>
<reference key="1">
    <citation type="journal article" date="1998" name="Nature">
        <title>Deciphering the biology of Mycobacterium tuberculosis from the complete genome sequence.</title>
        <authorList>
            <person name="Cole S.T."/>
            <person name="Brosch R."/>
            <person name="Parkhill J."/>
            <person name="Garnier T."/>
            <person name="Churcher C.M."/>
            <person name="Harris D.E."/>
            <person name="Gordon S.V."/>
            <person name="Eiglmeier K."/>
            <person name="Gas S."/>
            <person name="Barry C.E. III"/>
            <person name="Tekaia F."/>
            <person name="Badcock K."/>
            <person name="Basham D."/>
            <person name="Brown D."/>
            <person name="Chillingworth T."/>
            <person name="Connor R."/>
            <person name="Davies R.M."/>
            <person name="Devlin K."/>
            <person name="Feltwell T."/>
            <person name="Gentles S."/>
            <person name="Hamlin N."/>
            <person name="Holroyd S."/>
            <person name="Hornsby T."/>
            <person name="Jagels K."/>
            <person name="Krogh A."/>
            <person name="McLean J."/>
            <person name="Moule S."/>
            <person name="Murphy L.D."/>
            <person name="Oliver S."/>
            <person name="Osborne J."/>
            <person name="Quail M.A."/>
            <person name="Rajandream M.A."/>
            <person name="Rogers J."/>
            <person name="Rutter S."/>
            <person name="Seeger K."/>
            <person name="Skelton S."/>
            <person name="Squares S."/>
            <person name="Squares R."/>
            <person name="Sulston J.E."/>
            <person name="Taylor K."/>
            <person name="Whitehead S."/>
            <person name="Barrell B.G."/>
        </authorList>
    </citation>
    <scope>NUCLEOTIDE SEQUENCE [LARGE SCALE GENOMIC DNA]</scope>
    <source>
        <strain>ATCC 25618 / H37Rv</strain>
    </source>
</reference>
<reference key="2">
    <citation type="journal article" date="2011" name="Mol. Cell. Proteomics">
        <title>Proteogenomic analysis of Mycobacterium tuberculosis by high resolution mass spectrometry.</title>
        <authorList>
            <person name="Kelkar D.S."/>
            <person name="Kumar D."/>
            <person name="Kumar P."/>
            <person name="Balakrishnan L."/>
            <person name="Muthusamy B."/>
            <person name="Yadav A.K."/>
            <person name="Shrivastava P."/>
            <person name="Marimuthu A."/>
            <person name="Anand S."/>
            <person name="Sundaram H."/>
            <person name="Kingsbury R."/>
            <person name="Harsha H.C."/>
            <person name="Nair B."/>
            <person name="Prasad T.S."/>
            <person name="Chauhan D.S."/>
            <person name="Katoch K."/>
            <person name="Katoch V.M."/>
            <person name="Kumar P."/>
            <person name="Chaerkady R."/>
            <person name="Ramachandran S."/>
            <person name="Dash D."/>
            <person name="Pandey A."/>
        </authorList>
    </citation>
    <scope>IDENTIFICATION BY MASS SPECTROMETRY [LARGE SCALE ANALYSIS]</scope>
    <source>
        <strain>ATCC 25618 / H37Rv</strain>
    </source>
</reference>
<evidence type="ECO:0000250" key="1"/>
<evidence type="ECO:0000305" key="2"/>
<protein>
    <recommendedName>
        <fullName>Transaldolase</fullName>
        <ecNumber>2.2.1.2</ecNumber>
    </recommendedName>
</protein>
<dbReference type="EC" id="2.2.1.2"/>
<dbReference type="EMBL" id="AL123456">
    <property type="protein sequence ID" value="CCP44207.1"/>
    <property type="molecule type" value="Genomic_DNA"/>
</dbReference>
<dbReference type="PIR" id="C70917">
    <property type="entry name" value="C70917"/>
</dbReference>
<dbReference type="RefSeq" id="NP_215964.1">
    <property type="nucleotide sequence ID" value="NC_000962.3"/>
</dbReference>
<dbReference type="RefSeq" id="WP_003912809.1">
    <property type="nucleotide sequence ID" value="NZ_NVQJ01000071.1"/>
</dbReference>
<dbReference type="SMR" id="P9WG33"/>
<dbReference type="FunCoup" id="P9WG33">
    <property type="interactions" value="214"/>
</dbReference>
<dbReference type="STRING" id="83332.Rv1448c"/>
<dbReference type="PaxDb" id="83332-Rv1448c"/>
<dbReference type="DNASU" id="886606"/>
<dbReference type="GeneID" id="886606"/>
<dbReference type="KEGG" id="mtu:Rv1448c"/>
<dbReference type="KEGG" id="mtv:RVBD_1448c"/>
<dbReference type="TubercuList" id="Rv1448c"/>
<dbReference type="eggNOG" id="COG0176">
    <property type="taxonomic scope" value="Bacteria"/>
</dbReference>
<dbReference type="InParanoid" id="P9WG33"/>
<dbReference type="OrthoDB" id="9809101at2"/>
<dbReference type="PhylomeDB" id="P9WG33"/>
<dbReference type="UniPathway" id="UPA00115">
    <property type="reaction ID" value="UER00414"/>
</dbReference>
<dbReference type="Proteomes" id="UP000001584">
    <property type="component" value="Chromosome"/>
</dbReference>
<dbReference type="GO" id="GO:0005829">
    <property type="term" value="C:cytosol"/>
    <property type="evidence" value="ECO:0007005"/>
    <property type="project" value="MTBBASE"/>
</dbReference>
<dbReference type="GO" id="GO:0005576">
    <property type="term" value="C:extracellular region"/>
    <property type="evidence" value="ECO:0007005"/>
    <property type="project" value="MTBBASE"/>
</dbReference>
<dbReference type="GO" id="GO:0004801">
    <property type="term" value="F:transaldolase activity"/>
    <property type="evidence" value="ECO:0007669"/>
    <property type="project" value="UniProtKB-UniRule"/>
</dbReference>
<dbReference type="GO" id="GO:0005975">
    <property type="term" value="P:carbohydrate metabolic process"/>
    <property type="evidence" value="ECO:0007669"/>
    <property type="project" value="InterPro"/>
</dbReference>
<dbReference type="GO" id="GO:0006098">
    <property type="term" value="P:pentose-phosphate shunt"/>
    <property type="evidence" value="ECO:0007669"/>
    <property type="project" value="UniProtKB-UniRule"/>
</dbReference>
<dbReference type="CDD" id="cd00955">
    <property type="entry name" value="Transaldolase_like"/>
    <property type="match status" value="1"/>
</dbReference>
<dbReference type="Gene3D" id="3.20.20.70">
    <property type="entry name" value="Aldolase class I"/>
    <property type="match status" value="1"/>
</dbReference>
<dbReference type="HAMAP" id="MF_00493">
    <property type="entry name" value="Transaldolase_2"/>
    <property type="match status" value="1"/>
</dbReference>
<dbReference type="InterPro" id="IPR013785">
    <property type="entry name" value="Aldolase_TIM"/>
</dbReference>
<dbReference type="InterPro" id="IPR001585">
    <property type="entry name" value="TAL/FSA"/>
</dbReference>
<dbReference type="InterPro" id="IPR004732">
    <property type="entry name" value="Transaldolase_2"/>
</dbReference>
<dbReference type="InterPro" id="IPR018225">
    <property type="entry name" value="Transaldolase_AS"/>
</dbReference>
<dbReference type="NCBIfam" id="NF002881">
    <property type="entry name" value="PRK03343.1"/>
    <property type="match status" value="1"/>
</dbReference>
<dbReference type="NCBIfam" id="TIGR00876">
    <property type="entry name" value="tal_mycobact"/>
    <property type="match status" value="1"/>
</dbReference>
<dbReference type="PANTHER" id="PTHR10683">
    <property type="entry name" value="TRANSALDOLASE"/>
    <property type="match status" value="1"/>
</dbReference>
<dbReference type="PANTHER" id="PTHR10683:SF31">
    <property type="entry name" value="TRANSALDOLASE"/>
    <property type="match status" value="1"/>
</dbReference>
<dbReference type="Pfam" id="PF00923">
    <property type="entry name" value="TAL_FSA"/>
    <property type="match status" value="1"/>
</dbReference>
<dbReference type="PIRSF" id="PIRSF036915">
    <property type="entry name" value="Trnald_Bac_Plnt"/>
    <property type="match status" value="1"/>
</dbReference>
<dbReference type="SUPFAM" id="SSF51569">
    <property type="entry name" value="Aldolase"/>
    <property type="match status" value="1"/>
</dbReference>
<dbReference type="PROSITE" id="PS01054">
    <property type="entry name" value="TRANSALDOLASE_1"/>
    <property type="match status" value="1"/>
</dbReference>
<dbReference type="PROSITE" id="PS00958">
    <property type="entry name" value="TRANSALDOLASE_2"/>
    <property type="match status" value="1"/>
</dbReference>
<sequence>MTAQNPNLAALSAAGVSVWLDDLSRDRLRSGNLQELIDTKSVVGVTTNPSIFQKALSEGHTYDAQIAELAARGADVDATIRTVTTDDVRSACDVLVPQWEDSDGVDGRVSIEVDPRLAHETEKTIQQAIELWKIVDRPNLFIKIPATKAGLPAISAVLAEGISVNVTLIFSVQRYREVMDAYLTGMEKARQAGHSLSKIHSVASFFVSRVDTEIDKRLDRIGSRQALELRGQAGVANARLAYATYREVFEDSDRYRSLKVDGARVQRPLWASTGVKNPDYSDTLYVTELVAPHTVNTMPEKTIDAVADHGVIQGDTVTGTASDAQAVFDQLGAIGIDLTDVFAVLEEEGVRKFEASWNELLQETRAHLDTAAQ</sequence>
<gene>
    <name type="primary">tal</name>
    <name type="ordered locus">Rv1448c</name>
    <name type="ORF">MTCY493.06</name>
</gene>